<feature type="chain" id="PRO_0000290862" description="Small ribosomal subunit protein uS8">
    <location>
        <begin position="1"/>
        <end position="126"/>
    </location>
</feature>
<gene>
    <name evidence="1" type="primary">rpsH</name>
    <name type="ordered locus">LI0972</name>
</gene>
<reference key="1">
    <citation type="submission" date="2005-11" db="EMBL/GenBank/DDBJ databases">
        <title>The complete genome sequence of Lawsonia intracellularis: the causative agent of proliferative enteropathy.</title>
        <authorList>
            <person name="Kaur K."/>
            <person name="Zhang Q."/>
            <person name="Beckler D."/>
            <person name="Munir S."/>
            <person name="Li L."/>
            <person name="Kinsley K."/>
            <person name="Herron L."/>
            <person name="Peterson A."/>
            <person name="May B."/>
            <person name="Singh S."/>
            <person name="Gebhart C."/>
            <person name="Kapur V."/>
        </authorList>
    </citation>
    <scope>NUCLEOTIDE SEQUENCE [LARGE SCALE GENOMIC DNA]</scope>
    <source>
        <strain>PHE/MN1-00</strain>
    </source>
</reference>
<keyword id="KW-1185">Reference proteome</keyword>
<keyword id="KW-0687">Ribonucleoprotein</keyword>
<keyword id="KW-0689">Ribosomal protein</keyword>
<keyword id="KW-0694">RNA-binding</keyword>
<keyword id="KW-0699">rRNA-binding</keyword>
<evidence type="ECO:0000255" key="1">
    <source>
        <dbReference type="HAMAP-Rule" id="MF_01302"/>
    </source>
</evidence>
<evidence type="ECO:0000305" key="2"/>
<sequence length="126" mass="13983">MMTDPISDMLTRIRNAQLALHKDVAIPYSKIKYSIANILKEEGYINELTLNNGTITLYFKYYKGKAAIEGLRRISKSGRRVYVSTHDIPSVQNGLGICILSTSIGVIGCNKARCSKVGGELLCEVW</sequence>
<name>RS8_LAWIP</name>
<organism>
    <name type="scientific">Lawsonia intracellularis (strain PHE/MN1-00)</name>
    <dbReference type="NCBI Taxonomy" id="363253"/>
    <lineage>
        <taxon>Bacteria</taxon>
        <taxon>Pseudomonadati</taxon>
        <taxon>Thermodesulfobacteriota</taxon>
        <taxon>Desulfovibrionia</taxon>
        <taxon>Desulfovibrionales</taxon>
        <taxon>Desulfovibrionaceae</taxon>
        <taxon>Lawsonia</taxon>
    </lineage>
</organism>
<accession>Q1MPQ1</accession>
<dbReference type="EMBL" id="AM180252">
    <property type="protein sequence ID" value="CAJ55026.1"/>
    <property type="molecule type" value="Genomic_DNA"/>
</dbReference>
<dbReference type="RefSeq" id="WP_011527055.1">
    <property type="nucleotide sequence ID" value="NC_008011.1"/>
</dbReference>
<dbReference type="SMR" id="Q1MPQ1"/>
<dbReference type="STRING" id="363253.LI0972"/>
<dbReference type="KEGG" id="lip:LI0972"/>
<dbReference type="eggNOG" id="COG0096">
    <property type="taxonomic scope" value="Bacteria"/>
</dbReference>
<dbReference type="HOGENOM" id="CLU_098428_0_2_7"/>
<dbReference type="OrthoDB" id="9802617at2"/>
<dbReference type="Proteomes" id="UP000002430">
    <property type="component" value="Chromosome"/>
</dbReference>
<dbReference type="GO" id="GO:1990904">
    <property type="term" value="C:ribonucleoprotein complex"/>
    <property type="evidence" value="ECO:0007669"/>
    <property type="project" value="UniProtKB-KW"/>
</dbReference>
<dbReference type="GO" id="GO:0005840">
    <property type="term" value="C:ribosome"/>
    <property type="evidence" value="ECO:0007669"/>
    <property type="project" value="UniProtKB-KW"/>
</dbReference>
<dbReference type="GO" id="GO:0019843">
    <property type="term" value="F:rRNA binding"/>
    <property type="evidence" value="ECO:0007669"/>
    <property type="project" value="UniProtKB-UniRule"/>
</dbReference>
<dbReference type="GO" id="GO:0003735">
    <property type="term" value="F:structural constituent of ribosome"/>
    <property type="evidence" value="ECO:0007669"/>
    <property type="project" value="InterPro"/>
</dbReference>
<dbReference type="GO" id="GO:0006412">
    <property type="term" value="P:translation"/>
    <property type="evidence" value="ECO:0007669"/>
    <property type="project" value="UniProtKB-UniRule"/>
</dbReference>
<dbReference type="FunFam" id="3.30.1370.30:FF:000002">
    <property type="entry name" value="30S ribosomal protein S8"/>
    <property type="match status" value="1"/>
</dbReference>
<dbReference type="FunFam" id="3.30.1490.10:FF:000001">
    <property type="entry name" value="30S ribosomal protein S8"/>
    <property type="match status" value="1"/>
</dbReference>
<dbReference type="Gene3D" id="3.30.1370.30">
    <property type="match status" value="1"/>
</dbReference>
<dbReference type="Gene3D" id="3.30.1490.10">
    <property type="match status" value="1"/>
</dbReference>
<dbReference type="HAMAP" id="MF_01302_B">
    <property type="entry name" value="Ribosomal_uS8_B"/>
    <property type="match status" value="1"/>
</dbReference>
<dbReference type="InterPro" id="IPR000630">
    <property type="entry name" value="Ribosomal_uS8"/>
</dbReference>
<dbReference type="InterPro" id="IPR047863">
    <property type="entry name" value="Ribosomal_uS8_CS"/>
</dbReference>
<dbReference type="InterPro" id="IPR035987">
    <property type="entry name" value="Ribosomal_uS8_sf"/>
</dbReference>
<dbReference type="NCBIfam" id="NF001109">
    <property type="entry name" value="PRK00136.1"/>
    <property type="match status" value="1"/>
</dbReference>
<dbReference type="PANTHER" id="PTHR11758">
    <property type="entry name" value="40S RIBOSOMAL PROTEIN S15A"/>
    <property type="match status" value="1"/>
</dbReference>
<dbReference type="Pfam" id="PF00410">
    <property type="entry name" value="Ribosomal_S8"/>
    <property type="match status" value="1"/>
</dbReference>
<dbReference type="SUPFAM" id="SSF56047">
    <property type="entry name" value="Ribosomal protein S8"/>
    <property type="match status" value="1"/>
</dbReference>
<dbReference type="PROSITE" id="PS00053">
    <property type="entry name" value="RIBOSOMAL_S8"/>
    <property type="match status" value="1"/>
</dbReference>
<proteinExistence type="inferred from homology"/>
<comment type="function">
    <text evidence="1">One of the primary rRNA binding proteins, it binds directly to 16S rRNA central domain where it helps coordinate assembly of the platform of the 30S subunit.</text>
</comment>
<comment type="subunit">
    <text evidence="1">Part of the 30S ribosomal subunit. Contacts proteins S5 and S12.</text>
</comment>
<comment type="similarity">
    <text evidence="1">Belongs to the universal ribosomal protein uS8 family.</text>
</comment>
<protein>
    <recommendedName>
        <fullName evidence="1">Small ribosomal subunit protein uS8</fullName>
    </recommendedName>
    <alternativeName>
        <fullName evidence="2">30S ribosomal protein S8</fullName>
    </alternativeName>
</protein>